<accession>A5UMF6</accession>
<gene>
    <name evidence="1" type="primary">aroE</name>
    <name type="ordered locus">Msm_1179</name>
</gene>
<keyword id="KW-0028">Amino-acid biosynthesis</keyword>
<keyword id="KW-0057">Aromatic amino acid biosynthesis</keyword>
<keyword id="KW-0521">NADP</keyword>
<keyword id="KW-0560">Oxidoreductase</keyword>
<proteinExistence type="inferred from homology"/>
<evidence type="ECO:0000255" key="1">
    <source>
        <dbReference type="HAMAP-Rule" id="MF_00222"/>
    </source>
</evidence>
<name>AROE_METS3</name>
<reference key="1">
    <citation type="journal article" date="2007" name="Proc. Natl. Acad. Sci. U.S.A.">
        <title>Genomic and metabolic adaptations of Methanobrevibacter smithii to the human gut.</title>
        <authorList>
            <person name="Samuel B.S."/>
            <person name="Hansen E.E."/>
            <person name="Manchester J.K."/>
            <person name="Coutinho P.M."/>
            <person name="Henrissat B."/>
            <person name="Fulton R."/>
            <person name="Latreille P."/>
            <person name="Kim K."/>
            <person name="Wilson R.K."/>
            <person name="Gordon J.I."/>
        </authorList>
    </citation>
    <scope>NUCLEOTIDE SEQUENCE [LARGE SCALE GENOMIC DNA]</scope>
    <source>
        <strain>ATCC 35061 / DSM 861 / OCM 144 / PS</strain>
    </source>
</reference>
<feature type="chain" id="PRO_1000021306" description="Shikimate dehydrogenase (NADP(+))">
    <location>
        <begin position="1"/>
        <end position="281"/>
    </location>
</feature>
<feature type="active site" description="Proton acceptor" evidence="1">
    <location>
        <position position="70"/>
    </location>
</feature>
<feature type="binding site" evidence="1">
    <location>
        <begin position="19"/>
        <end position="21"/>
    </location>
    <ligand>
        <name>shikimate</name>
        <dbReference type="ChEBI" id="CHEBI:36208"/>
    </ligand>
</feature>
<feature type="binding site" evidence="1">
    <location>
        <position position="66"/>
    </location>
    <ligand>
        <name>shikimate</name>
        <dbReference type="ChEBI" id="CHEBI:36208"/>
    </ligand>
</feature>
<feature type="binding site" evidence="1">
    <location>
        <position position="91"/>
    </location>
    <ligand>
        <name>shikimate</name>
        <dbReference type="ChEBI" id="CHEBI:36208"/>
    </ligand>
</feature>
<feature type="binding site" evidence="1">
    <location>
        <position position="104"/>
    </location>
    <ligand>
        <name>shikimate</name>
        <dbReference type="ChEBI" id="CHEBI:36208"/>
    </ligand>
</feature>
<feature type="binding site" evidence="1">
    <location>
        <begin position="127"/>
        <end position="131"/>
    </location>
    <ligand>
        <name>NADP(+)</name>
        <dbReference type="ChEBI" id="CHEBI:58349"/>
    </ligand>
</feature>
<feature type="binding site" evidence="1">
    <location>
        <position position="223"/>
    </location>
    <ligand>
        <name>NADP(+)</name>
        <dbReference type="ChEBI" id="CHEBI:58349"/>
    </ligand>
</feature>
<feature type="binding site" evidence="1">
    <location>
        <position position="225"/>
    </location>
    <ligand>
        <name>shikimate</name>
        <dbReference type="ChEBI" id="CHEBI:36208"/>
    </ligand>
</feature>
<feature type="binding site" evidence="1">
    <location>
        <position position="246"/>
    </location>
    <ligand>
        <name>NADP(+)</name>
        <dbReference type="ChEBI" id="CHEBI:58349"/>
    </ligand>
</feature>
<protein>
    <recommendedName>
        <fullName evidence="1">Shikimate dehydrogenase (NADP(+))</fullName>
        <shortName evidence="1">SDH</shortName>
        <ecNumber evidence="1">1.1.1.25</ecNumber>
    </recommendedName>
</protein>
<sequence>MINGSTKIVGLIGHPVEHSFSPPMHNAAFEELGLDYAYVPFNVCPENLKSAILGAKSLNIKGFNVTIPHKINVMKYLDKLDPIAKLIGAVNTIDFKEMKGYNTDGIGCIKAIGEVTSIKDKNIVVAGAGGASRAISFYLARENPQSIHILNRDINKAKSLAEDLKNSKLTDNVDFDSIDKIVGYVSDADILIDTTPVGMSPHVNDEAIVKAEDMHSDLVVNDIVYNPNETVLLSEAIKAGATPVYGIKMLLYQGAESFEIWTGEKAPVDVMEKTLRKTLDL</sequence>
<comment type="function">
    <text evidence="1">Involved in the biosynthesis of the chorismate, which leads to the biosynthesis of aromatic amino acids. Catalyzes the reversible NADPH linked reduction of 3-dehydroshikimate (DHSA) to yield shikimate (SA).</text>
</comment>
<comment type="catalytic activity">
    <reaction evidence="1">
        <text>shikimate + NADP(+) = 3-dehydroshikimate + NADPH + H(+)</text>
        <dbReference type="Rhea" id="RHEA:17737"/>
        <dbReference type="ChEBI" id="CHEBI:15378"/>
        <dbReference type="ChEBI" id="CHEBI:16630"/>
        <dbReference type="ChEBI" id="CHEBI:36208"/>
        <dbReference type="ChEBI" id="CHEBI:57783"/>
        <dbReference type="ChEBI" id="CHEBI:58349"/>
        <dbReference type="EC" id="1.1.1.25"/>
    </reaction>
</comment>
<comment type="pathway">
    <text evidence="1">Metabolic intermediate biosynthesis; chorismate biosynthesis; chorismate from D-erythrose 4-phosphate and phosphoenolpyruvate: step 4/7.</text>
</comment>
<comment type="subunit">
    <text evidence="1">Homodimer.</text>
</comment>
<comment type="similarity">
    <text evidence="1">Belongs to the shikimate dehydrogenase family.</text>
</comment>
<dbReference type="EC" id="1.1.1.25" evidence="1"/>
<dbReference type="EMBL" id="CP000678">
    <property type="protein sequence ID" value="ABQ87384.1"/>
    <property type="molecule type" value="Genomic_DNA"/>
</dbReference>
<dbReference type="RefSeq" id="WP_011954337.1">
    <property type="nucleotide sequence ID" value="NZ_CP117965.1"/>
</dbReference>
<dbReference type="SMR" id="A5UMF6"/>
<dbReference type="STRING" id="420247.Msm_1179"/>
<dbReference type="EnsemblBacteria" id="ABQ87384">
    <property type="protein sequence ID" value="ABQ87384"/>
    <property type="gene ID" value="Msm_1179"/>
</dbReference>
<dbReference type="GeneID" id="78817830"/>
<dbReference type="KEGG" id="msi:Msm_1179"/>
<dbReference type="PATRIC" id="fig|420247.28.peg.1178"/>
<dbReference type="eggNOG" id="arCOG01033">
    <property type="taxonomic scope" value="Archaea"/>
</dbReference>
<dbReference type="HOGENOM" id="CLU_044063_4_1_2"/>
<dbReference type="UniPathway" id="UPA00053">
    <property type="reaction ID" value="UER00087"/>
</dbReference>
<dbReference type="Proteomes" id="UP000001992">
    <property type="component" value="Chromosome"/>
</dbReference>
<dbReference type="GO" id="GO:0050661">
    <property type="term" value="F:NADP binding"/>
    <property type="evidence" value="ECO:0007669"/>
    <property type="project" value="InterPro"/>
</dbReference>
<dbReference type="GO" id="GO:0004764">
    <property type="term" value="F:shikimate 3-dehydrogenase (NADP+) activity"/>
    <property type="evidence" value="ECO:0007669"/>
    <property type="project" value="UniProtKB-UniRule"/>
</dbReference>
<dbReference type="GO" id="GO:0008652">
    <property type="term" value="P:amino acid biosynthetic process"/>
    <property type="evidence" value="ECO:0007669"/>
    <property type="project" value="UniProtKB-KW"/>
</dbReference>
<dbReference type="GO" id="GO:0009073">
    <property type="term" value="P:aromatic amino acid family biosynthetic process"/>
    <property type="evidence" value="ECO:0007669"/>
    <property type="project" value="UniProtKB-KW"/>
</dbReference>
<dbReference type="GO" id="GO:0009423">
    <property type="term" value="P:chorismate biosynthetic process"/>
    <property type="evidence" value="ECO:0007669"/>
    <property type="project" value="UniProtKB-UniRule"/>
</dbReference>
<dbReference type="GO" id="GO:0019632">
    <property type="term" value="P:shikimate metabolic process"/>
    <property type="evidence" value="ECO:0007669"/>
    <property type="project" value="InterPro"/>
</dbReference>
<dbReference type="CDD" id="cd01065">
    <property type="entry name" value="NAD_bind_Shikimate_DH"/>
    <property type="match status" value="1"/>
</dbReference>
<dbReference type="Gene3D" id="3.40.50.10860">
    <property type="entry name" value="Leucine Dehydrogenase, chain A, domain 1"/>
    <property type="match status" value="1"/>
</dbReference>
<dbReference type="Gene3D" id="3.40.50.720">
    <property type="entry name" value="NAD(P)-binding Rossmann-like Domain"/>
    <property type="match status" value="1"/>
</dbReference>
<dbReference type="HAMAP" id="MF_00222">
    <property type="entry name" value="Shikimate_DH_AroE"/>
    <property type="match status" value="1"/>
</dbReference>
<dbReference type="InterPro" id="IPR046346">
    <property type="entry name" value="Aminoacid_DH-like_N_sf"/>
</dbReference>
<dbReference type="InterPro" id="IPR036291">
    <property type="entry name" value="NAD(P)-bd_dom_sf"/>
</dbReference>
<dbReference type="InterPro" id="IPR041121">
    <property type="entry name" value="SDH_C"/>
</dbReference>
<dbReference type="InterPro" id="IPR011342">
    <property type="entry name" value="Shikimate_DH"/>
</dbReference>
<dbReference type="InterPro" id="IPR013708">
    <property type="entry name" value="Shikimate_DH-bd_N"/>
</dbReference>
<dbReference type="InterPro" id="IPR022893">
    <property type="entry name" value="Shikimate_DH_fam"/>
</dbReference>
<dbReference type="InterPro" id="IPR006151">
    <property type="entry name" value="Shikm_DH/Glu-tRNA_Rdtase"/>
</dbReference>
<dbReference type="NCBIfam" id="TIGR00507">
    <property type="entry name" value="aroE"/>
    <property type="match status" value="1"/>
</dbReference>
<dbReference type="NCBIfam" id="NF001314">
    <property type="entry name" value="PRK00258.2-2"/>
    <property type="match status" value="1"/>
</dbReference>
<dbReference type="NCBIfam" id="NF001319">
    <property type="entry name" value="PRK00258.3-3"/>
    <property type="match status" value="1"/>
</dbReference>
<dbReference type="PANTHER" id="PTHR21089:SF1">
    <property type="entry name" value="BIFUNCTIONAL 3-DEHYDROQUINATE DEHYDRATASE_SHIKIMATE DEHYDROGENASE, CHLOROPLASTIC"/>
    <property type="match status" value="1"/>
</dbReference>
<dbReference type="PANTHER" id="PTHR21089">
    <property type="entry name" value="SHIKIMATE DEHYDROGENASE"/>
    <property type="match status" value="1"/>
</dbReference>
<dbReference type="Pfam" id="PF18317">
    <property type="entry name" value="SDH_C"/>
    <property type="match status" value="1"/>
</dbReference>
<dbReference type="Pfam" id="PF01488">
    <property type="entry name" value="Shikimate_DH"/>
    <property type="match status" value="1"/>
</dbReference>
<dbReference type="Pfam" id="PF08501">
    <property type="entry name" value="Shikimate_dh_N"/>
    <property type="match status" value="1"/>
</dbReference>
<dbReference type="SUPFAM" id="SSF53223">
    <property type="entry name" value="Aminoacid dehydrogenase-like, N-terminal domain"/>
    <property type="match status" value="1"/>
</dbReference>
<dbReference type="SUPFAM" id="SSF51735">
    <property type="entry name" value="NAD(P)-binding Rossmann-fold domains"/>
    <property type="match status" value="1"/>
</dbReference>
<organism>
    <name type="scientific">Methanobrevibacter smithii (strain ATCC 35061 / DSM 861 / OCM 144 / PS)</name>
    <dbReference type="NCBI Taxonomy" id="420247"/>
    <lineage>
        <taxon>Archaea</taxon>
        <taxon>Methanobacteriati</taxon>
        <taxon>Methanobacteriota</taxon>
        <taxon>Methanomada group</taxon>
        <taxon>Methanobacteria</taxon>
        <taxon>Methanobacteriales</taxon>
        <taxon>Methanobacteriaceae</taxon>
        <taxon>Methanobrevibacter</taxon>
    </lineage>
</organism>